<accession>P15519</accession>
<accession>Q54KF8</accession>
<gene>
    <name type="primary">gerA</name>
    <name type="ORF">DDB_G0287293</name>
</gene>
<comment type="subcellular location">
    <subcellularLocation>
        <location evidence="3">Secreted</location>
    </subcellularLocation>
</comment>
<comment type="developmental stage">
    <text evidence="2">Expressed during spore germination. Seems to be present at the time of sporulation.</text>
</comment>
<comment type="similarity">
    <text evidence="3">Belongs to the Dictyostelium gerABC family.</text>
</comment>
<keyword id="KW-0325">Glycoprotein</keyword>
<keyword id="KW-1185">Reference proteome</keyword>
<keyword id="KW-0964">Secreted</keyword>
<keyword id="KW-0732">Signal</keyword>
<keyword id="KW-0749">Sporulation</keyword>
<sequence>MNIKNSLILIISTIFVLSMINGGLTSDPTCVGAPDGQVYLFSSWDFQGERYVYNISQGYLSLPDGFRNNIQSFVSGADVCFVKWYPSEQYQITAGESHRNYAALTNFGQRMDAIIPGNCSNIVCSPK</sequence>
<evidence type="ECO:0000255" key="1"/>
<evidence type="ECO:0000269" key="2">
    <source>
    </source>
</evidence>
<evidence type="ECO:0000305" key="3"/>
<organism>
    <name type="scientific">Dictyostelium discoideum</name>
    <name type="common">Social amoeba</name>
    <dbReference type="NCBI Taxonomy" id="44689"/>
    <lineage>
        <taxon>Eukaryota</taxon>
        <taxon>Amoebozoa</taxon>
        <taxon>Evosea</taxon>
        <taxon>Eumycetozoa</taxon>
        <taxon>Dictyostelia</taxon>
        <taxon>Dictyosteliales</taxon>
        <taxon>Dictyosteliaceae</taxon>
        <taxon>Dictyostelium</taxon>
    </lineage>
</organism>
<reference key="1">
    <citation type="journal article" date="1989" name="J. Mol. Biol.">
        <title>Organization of a gene family developmentally regulated during Dictyostelium discoideum spore germination.</title>
        <authorList>
            <person name="Giorda R."/>
            <person name="Ohmachi T."/>
            <person name="Ennis H.L."/>
        </authorList>
    </citation>
    <scope>NUCLEOTIDE SEQUENCE [GENOMIC DNA / MRNA]</scope>
    <scope>DEVELOPMENTAL STAGE</scope>
</reference>
<reference key="2">
    <citation type="journal article" date="2005" name="Nature">
        <title>The genome of the social amoeba Dictyostelium discoideum.</title>
        <authorList>
            <person name="Eichinger L."/>
            <person name="Pachebat J.A."/>
            <person name="Gloeckner G."/>
            <person name="Rajandream M.A."/>
            <person name="Sucgang R."/>
            <person name="Berriman M."/>
            <person name="Song J."/>
            <person name="Olsen R."/>
            <person name="Szafranski K."/>
            <person name="Xu Q."/>
            <person name="Tunggal B."/>
            <person name="Kummerfeld S."/>
            <person name="Madera M."/>
            <person name="Konfortov B.A."/>
            <person name="Rivero F."/>
            <person name="Bankier A.T."/>
            <person name="Lehmann R."/>
            <person name="Hamlin N."/>
            <person name="Davies R."/>
            <person name="Gaudet P."/>
            <person name="Fey P."/>
            <person name="Pilcher K."/>
            <person name="Chen G."/>
            <person name="Saunders D."/>
            <person name="Sodergren E.J."/>
            <person name="Davis P."/>
            <person name="Kerhornou A."/>
            <person name="Nie X."/>
            <person name="Hall N."/>
            <person name="Anjard C."/>
            <person name="Hemphill L."/>
            <person name="Bason N."/>
            <person name="Farbrother P."/>
            <person name="Desany B."/>
            <person name="Just E."/>
            <person name="Morio T."/>
            <person name="Rost R."/>
            <person name="Churcher C.M."/>
            <person name="Cooper J."/>
            <person name="Haydock S."/>
            <person name="van Driessche N."/>
            <person name="Cronin A."/>
            <person name="Goodhead I."/>
            <person name="Muzny D.M."/>
            <person name="Mourier T."/>
            <person name="Pain A."/>
            <person name="Lu M."/>
            <person name="Harper D."/>
            <person name="Lindsay R."/>
            <person name="Hauser H."/>
            <person name="James K.D."/>
            <person name="Quiles M."/>
            <person name="Madan Babu M."/>
            <person name="Saito T."/>
            <person name="Buchrieser C."/>
            <person name="Wardroper A."/>
            <person name="Felder M."/>
            <person name="Thangavelu M."/>
            <person name="Johnson D."/>
            <person name="Knights A."/>
            <person name="Loulseged H."/>
            <person name="Mungall K.L."/>
            <person name="Oliver K."/>
            <person name="Price C."/>
            <person name="Quail M.A."/>
            <person name="Urushihara H."/>
            <person name="Hernandez J."/>
            <person name="Rabbinowitsch E."/>
            <person name="Steffen D."/>
            <person name="Sanders M."/>
            <person name="Ma J."/>
            <person name="Kohara Y."/>
            <person name="Sharp S."/>
            <person name="Simmonds M.N."/>
            <person name="Spiegler S."/>
            <person name="Tivey A."/>
            <person name="Sugano S."/>
            <person name="White B."/>
            <person name="Walker D."/>
            <person name="Woodward J.R."/>
            <person name="Winckler T."/>
            <person name="Tanaka Y."/>
            <person name="Shaulsky G."/>
            <person name="Schleicher M."/>
            <person name="Weinstock G.M."/>
            <person name="Rosenthal A."/>
            <person name="Cox E.C."/>
            <person name="Chisholm R.L."/>
            <person name="Gibbs R.A."/>
            <person name="Loomis W.F."/>
            <person name="Platzer M."/>
            <person name="Kay R.R."/>
            <person name="Williams J.G."/>
            <person name="Dear P.H."/>
            <person name="Noegel A.A."/>
            <person name="Barrell B.G."/>
            <person name="Kuspa A."/>
        </authorList>
    </citation>
    <scope>NUCLEOTIDE SEQUENCE [LARGE SCALE GENOMIC DNA]</scope>
    <source>
        <strain>AX4</strain>
    </source>
</reference>
<proteinExistence type="evidence at transcript level"/>
<name>SPG1_DICDI</name>
<feature type="signal peptide" evidence="1">
    <location>
        <begin position="1"/>
        <end position="25"/>
    </location>
</feature>
<feature type="chain" id="PRO_0000022392" description="Spore germination protein 1">
    <location>
        <begin position="26"/>
        <end position="127"/>
    </location>
</feature>
<feature type="glycosylation site" description="N-linked (GlcNAc...) asparagine" evidence="1">
    <location>
        <position position="54"/>
    </location>
</feature>
<feature type="glycosylation site" description="N-linked (GlcNAc...) asparagine" evidence="1">
    <location>
        <position position="118"/>
    </location>
</feature>
<dbReference type="EMBL" id="M19466">
    <property type="protein sequence ID" value="AAA02986.1"/>
    <property type="molecule type" value="mRNA"/>
</dbReference>
<dbReference type="EMBL" id="M19467">
    <property type="protein sequence ID" value="AAA67430.1"/>
    <property type="molecule type" value="Genomic_DNA"/>
</dbReference>
<dbReference type="EMBL" id="AAFI02000100">
    <property type="protein sequence ID" value="EAL63714.1"/>
    <property type="molecule type" value="Genomic_DNA"/>
</dbReference>
<dbReference type="PIR" id="S02161">
    <property type="entry name" value="S02161"/>
</dbReference>
<dbReference type="RefSeq" id="XP_637265.1">
    <property type="nucleotide sequence ID" value="XM_632173.1"/>
</dbReference>
<dbReference type="SMR" id="P15519"/>
<dbReference type="FunCoup" id="P15519">
    <property type="interactions" value="640"/>
</dbReference>
<dbReference type="STRING" id="44689.P15519"/>
<dbReference type="GlyCosmos" id="P15519">
    <property type="glycosylation" value="2 sites, No reported glycans"/>
</dbReference>
<dbReference type="GlyGen" id="P15519">
    <property type="glycosylation" value="2 sites"/>
</dbReference>
<dbReference type="PaxDb" id="44689-DDB0191308"/>
<dbReference type="EnsemblProtists" id="EAL63714">
    <property type="protein sequence ID" value="EAL63714"/>
    <property type="gene ID" value="DDB_G0287293"/>
</dbReference>
<dbReference type="GeneID" id="8626096"/>
<dbReference type="KEGG" id="ddi:DDB_G0287293"/>
<dbReference type="dictyBase" id="DDB_G0287293">
    <property type="gene designation" value="gerA"/>
</dbReference>
<dbReference type="VEuPathDB" id="AmoebaDB:DDB_G0287293"/>
<dbReference type="eggNOG" id="ENOG502RI0A">
    <property type="taxonomic scope" value="Eukaryota"/>
</dbReference>
<dbReference type="HOGENOM" id="CLU_1974670_0_0_1"/>
<dbReference type="InParanoid" id="P15519"/>
<dbReference type="PhylomeDB" id="P15519"/>
<dbReference type="PRO" id="PR:P15519"/>
<dbReference type="Proteomes" id="UP000002195">
    <property type="component" value="Chromosome 5"/>
</dbReference>
<dbReference type="GO" id="GO:0005576">
    <property type="term" value="C:extracellular region"/>
    <property type="evidence" value="ECO:0007669"/>
    <property type="project" value="UniProtKB-SubCell"/>
</dbReference>
<dbReference type="GO" id="GO:0009847">
    <property type="term" value="P:spore germination"/>
    <property type="evidence" value="ECO:0000270"/>
    <property type="project" value="dictyBase"/>
</dbReference>
<dbReference type="GO" id="GO:0030435">
    <property type="term" value="P:sporulation resulting in formation of a cellular spore"/>
    <property type="evidence" value="ECO:0007669"/>
    <property type="project" value="UniProtKB-KW"/>
</dbReference>
<protein>
    <recommendedName>
        <fullName>Spore germination protein 1</fullName>
        <shortName>SPG1</shortName>
    </recommendedName>
</protein>